<accession>C4ZYM6</accession>
<gene>
    <name evidence="1" type="primary">rimM</name>
    <name type="ordered locus">BWG_2367</name>
</gene>
<name>RIMM_ECOBW</name>
<dbReference type="EMBL" id="CP001396">
    <property type="protein sequence ID" value="ACR61733.1"/>
    <property type="molecule type" value="Genomic_DNA"/>
</dbReference>
<dbReference type="RefSeq" id="WP_000043335.1">
    <property type="nucleotide sequence ID" value="NC_012759.1"/>
</dbReference>
<dbReference type="SMR" id="C4ZYM6"/>
<dbReference type="GeneID" id="93774458"/>
<dbReference type="KEGG" id="ebw:BWG_2367"/>
<dbReference type="HOGENOM" id="CLU_077636_1_0_6"/>
<dbReference type="GO" id="GO:0005737">
    <property type="term" value="C:cytoplasm"/>
    <property type="evidence" value="ECO:0007669"/>
    <property type="project" value="UniProtKB-SubCell"/>
</dbReference>
<dbReference type="GO" id="GO:0005840">
    <property type="term" value="C:ribosome"/>
    <property type="evidence" value="ECO:0007669"/>
    <property type="project" value="InterPro"/>
</dbReference>
<dbReference type="GO" id="GO:0043022">
    <property type="term" value="F:ribosome binding"/>
    <property type="evidence" value="ECO:0007669"/>
    <property type="project" value="InterPro"/>
</dbReference>
<dbReference type="GO" id="GO:0042274">
    <property type="term" value="P:ribosomal small subunit biogenesis"/>
    <property type="evidence" value="ECO:0007669"/>
    <property type="project" value="UniProtKB-UniRule"/>
</dbReference>
<dbReference type="GO" id="GO:0006364">
    <property type="term" value="P:rRNA processing"/>
    <property type="evidence" value="ECO:0007669"/>
    <property type="project" value="UniProtKB-UniRule"/>
</dbReference>
<dbReference type="FunFam" id="2.30.30.240:FF:000001">
    <property type="entry name" value="Ribosome maturation factor RimM"/>
    <property type="match status" value="1"/>
</dbReference>
<dbReference type="FunFam" id="2.40.30.60:FF:000001">
    <property type="entry name" value="Ribosome maturation factor RimM"/>
    <property type="match status" value="1"/>
</dbReference>
<dbReference type="Gene3D" id="2.30.30.240">
    <property type="entry name" value="PRC-barrel domain"/>
    <property type="match status" value="1"/>
</dbReference>
<dbReference type="Gene3D" id="2.40.30.60">
    <property type="entry name" value="RimM"/>
    <property type="match status" value="1"/>
</dbReference>
<dbReference type="HAMAP" id="MF_00014">
    <property type="entry name" value="Ribosome_mat_RimM"/>
    <property type="match status" value="1"/>
</dbReference>
<dbReference type="InterPro" id="IPR011033">
    <property type="entry name" value="PRC_barrel-like_sf"/>
</dbReference>
<dbReference type="InterPro" id="IPR056792">
    <property type="entry name" value="PRC_RimM"/>
</dbReference>
<dbReference type="InterPro" id="IPR011961">
    <property type="entry name" value="RimM"/>
</dbReference>
<dbReference type="InterPro" id="IPR002676">
    <property type="entry name" value="RimM_N"/>
</dbReference>
<dbReference type="InterPro" id="IPR036976">
    <property type="entry name" value="RimM_N_sf"/>
</dbReference>
<dbReference type="InterPro" id="IPR009000">
    <property type="entry name" value="Transl_B-barrel_sf"/>
</dbReference>
<dbReference type="NCBIfam" id="TIGR02273">
    <property type="entry name" value="16S_RimM"/>
    <property type="match status" value="1"/>
</dbReference>
<dbReference type="PANTHER" id="PTHR33692">
    <property type="entry name" value="RIBOSOME MATURATION FACTOR RIMM"/>
    <property type="match status" value="1"/>
</dbReference>
<dbReference type="PANTHER" id="PTHR33692:SF1">
    <property type="entry name" value="RIBOSOME MATURATION FACTOR RIMM"/>
    <property type="match status" value="1"/>
</dbReference>
<dbReference type="Pfam" id="PF24986">
    <property type="entry name" value="PRC_RimM"/>
    <property type="match status" value="1"/>
</dbReference>
<dbReference type="Pfam" id="PF01782">
    <property type="entry name" value="RimM"/>
    <property type="match status" value="1"/>
</dbReference>
<dbReference type="SUPFAM" id="SSF50346">
    <property type="entry name" value="PRC-barrel domain"/>
    <property type="match status" value="1"/>
</dbReference>
<dbReference type="SUPFAM" id="SSF50447">
    <property type="entry name" value="Translation proteins"/>
    <property type="match status" value="1"/>
</dbReference>
<organism>
    <name type="scientific">Escherichia coli (strain K12 / MC4100 / BW2952)</name>
    <dbReference type="NCBI Taxonomy" id="595496"/>
    <lineage>
        <taxon>Bacteria</taxon>
        <taxon>Pseudomonadati</taxon>
        <taxon>Pseudomonadota</taxon>
        <taxon>Gammaproteobacteria</taxon>
        <taxon>Enterobacterales</taxon>
        <taxon>Enterobacteriaceae</taxon>
        <taxon>Escherichia</taxon>
    </lineage>
</organism>
<reference key="1">
    <citation type="journal article" date="2009" name="J. Bacteriol.">
        <title>Genomic sequencing reveals regulatory mutations and recombinational events in the widely used MC4100 lineage of Escherichia coli K-12.</title>
        <authorList>
            <person name="Ferenci T."/>
            <person name="Zhou Z."/>
            <person name="Betteridge T."/>
            <person name="Ren Y."/>
            <person name="Liu Y."/>
            <person name="Feng L."/>
            <person name="Reeves P.R."/>
            <person name="Wang L."/>
        </authorList>
    </citation>
    <scope>NUCLEOTIDE SEQUENCE [LARGE SCALE GENOMIC DNA]</scope>
    <source>
        <strain>K12 / MC4100 / BW2952</strain>
    </source>
</reference>
<comment type="function">
    <text evidence="1">An accessory protein needed during the final step in the assembly of 30S ribosomal subunit, possibly for assembly of the head region. Essential for efficient processing of 16S rRNA. May be needed both before and after RbfA during the maturation of 16S rRNA. It has affinity for free ribosomal 30S subunits but not for 70S ribosomes.</text>
</comment>
<comment type="subunit">
    <text evidence="1">Binds ribosomal protein uS19.</text>
</comment>
<comment type="subcellular location">
    <subcellularLocation>
        <location evidence="1">Cytoplasm</location>
    </subcellularLocation>
</comment>
<comment type="domain">
    <text evidence="1">The PRC barrel domain binds ribosomal protein uS19.</text>
</comment>
<comment type="similarity">
    <text evidence="1">Belongs to the RimM family.</text>
</comment>
<evidence type="ECO:0000255" key="1">
    <source>
        <dbReference type="HAMAP-Rule" id="MF_00014"/>
    </source>
</evidence>
<protein>
    <recommendedName>
        <fullName evidence="1">Ribosome maturation factor RimM</fullName>
    </recommendedName>
</protein>
<sequence>MSKQLTAQAPVDPIVLGKMGSSYGIRGWLRVFSSTEDAESIFDYQPWFIQKAGQWQQVQLESWKHHNQDMIIKLKGVDDRDAANLLTNCEIVVDSSQLPQLEEGDYYWKDLMGCQVVTTEGYDLGKVVDMMETGSNDVLVIKANLKDAFGIKERLVPFLDGQVIKKVDLTTRSIEVDWDPGF</sequence>
<proteinExistence type="inferred from homology"/>
<feature type="chain" id="PRO_1000201805" description="Ribosome maturation factor RimM">
    <location>
        <begin position="1"/>
        <end position="182"/>
    </location>
</feature>
<feature type="domain" description="PRC barrel" evidence="1">
    <location>
        <begin position="102"/>
        <end position="182"/>
    </location>
</feature>
<keyword id="KW-0143">Chaperone</keyword>
<keyword id="KW-0963">Cytoplasm</keyword>
<keyword id="KW-0690">Ribosome biogenesis</keyword>
<keyword id="KW-0698">rRNA processing</keyword>